<reference key="1">
    <citation type="journal article" date="1998" name="J. Biol. Chem.">
        <title>cDNA cloning and characterization of sciellin, a LIM domain protein of the keratinocyte cornified envelope.</title>
        <authorList>
            <person name="Champliaud M.-F."/>
            <person name="Burgeson R.E."/>
            <person name="Jin W."/>
            <person name="Baden H.P."/>
            <person name="Olson P.F."/>
        </authorList>
    </citation>
    <scope>NUCLEOTIDE SEQUENCE [MRNA] (ISOFORM 2)</scope>
    <scope>PROTEIN SEQUENCE OF 463-477 AND 655-670</scope>
    <source>
        <tissue>Foreskin</tissue>
    </source>
</reference>
<reference key="2">
    <citation type="journal article" date="2004" name="Nat. Genet.">
        <title>Complete sequencing and characterization of 21,243 full-length human cDNAs.</title>
        <authorList>
            <person name="Ota T."/>
            <person name="Suzuki Y."/>
            <person name="Nishikawa T."/>
            <person name="Otsuki T."/>
            <person name="Sugiyama T."/>
            <person name="Irie R."/>
            <person name="Wakamatsu A."/>
            <person name="Hayashi K."/>
            <person name="Sato H."/>
            <person name="Nagai K."/>
            <person name="Kimura K."/>
            <person name="Makita H."/>
            <person name="Sekine M."/>
            <person name="Obayashi M."/>
            <person name="Nishi T."/>
            <person name="Shibahara T."/>
            <person name="Tanaka T."/>
            <person name="Ishii S."/>
            <person name="Yamamoto J."/>
            <person name="Saito K."/>
            <person name="Kawai Y."/>
            <person name="Isono Y."/>
            <person name="Nakamura Y."/>
            <person name="Nagahari K."/>
            <person name="Murakami K."/>
            <person name="Yasuda T."/>
            <person name="Iwayanagi T."/>
            <person name="Wagatsuma M."/>
            <person name="Shiratori A."/>
            <person name="Sudo H."/>
            <person name="Hosoiri T."/>
            <person name="Kaku Y."/>
            <person name="Kodaira H."/>
            <person name="Kondo H."/>
            <person name="Sugawara M."/>
            <person name="Takahashi M."/>
            <person name="Kanda K."/>
            <person name="Yokoi T."/>
            <person name="Furuya T."/>
            <person name="Kikkawa E."/>
            <person name="Omura Y."/>
            <person name="Abe K."/>
            <person name="Kamihara K."/>
            <person name="Katsuta N."/>
            <person name="Sato K."/>
            <person name="Tanikawa M."/>
            <person name="Yamazaki M."/>
            <person name="Ninomiya K."/>
            <person name="Ishibashi T."/>
            <person name="Yamashita H."/>
            <person name="Murakawa K."/>
            <person name="Fujimori K."/>
            <person name="Tanai H."/>
            <person name="Kimata M."/>
            <person name="Watanabe M."/>
            <person name="Hiraoka S."/>
            <person name="Chiba Y."/>
            <person name="Ishida S."/>
            <person name="Ono Y."/>
            <person name="Takiguchi S."/>
            <person name="Watanabe S."/>
            <person name="Yosida M."/>
            <person name="Hotuta T."/>
            <person name="Kusano J."/>
            <person name="Kanehori K."/>
            <person name="Takahashi-Fujii A."/>
            <person name="Hara H."/>
            <person name="Tanase T.-O."/>
            <person name="Nomura Y."/>
            <person name="Togiya S."/>
            <person name="Komai F."/>
            <person name="Hara R."/>
            <person name="Takeuchi K."/>
            <person name="Arita M."/>
            <person name="Imose N."/>
            <person name="Musashino K."/>
            <person name="Yuuki H."/>
            <person name="Oshima A."/>
            <person name="Sasaki N."/>
            <person name="Aotsuka S."/>
            <person name="Yoshikawa Y."/>
            <person name="Matsunawa H."/>
            <person name="Ichihara T."/>
            <person name="Shiohata N."/>
            <person name="Sano S."/>
            <person name="Moriya S."/>
            <person name="Momiyama H."/>
            <person name="Satoh N."/>
            <person name="Takami S."/>
            <person name="Terashima Y."/>
            <person name="Suzuki O."/>
            <person name="Nakagawa S."/>
            <person name="Senoh A."/>
            <person name="Mizoguchi H."/>
            <person name="Goto Y."/>
            <person name="Shimizu F."/>
            <person name="Wakebe H."/>
            <person name="Hishigaki H."/>
            <person name="Watanabe T."/>
            <person name="Sugiyama A."/>
            <person name="Takemoto M."/>
            <person name="Kawakami B."/>
            <person name="Yamazaki M."/>
            <person name="Watanabe K."/>
            <person name="Kumagai A."/>
            <person name="Itakura S."/>
            <person name="Fukuzumi Y."/>
            <person name="Fujimori Y."/>
            <person name="Komiyama M."/>
            <person name="Tashiro H."/>
            <person name="Tanigami A."/>
            <person name="Fujiwara T."/>
            <person name="Ono T."/>
            <person name="Yamada K."/>
            <person name="Fujii Y."/>
            <person name="Ozaki K."/>
            <person name="Hirao M."/>
            <person name="Ohmori Y."/>
            <person name="Kawabata A."/>
            <person name="Hikiji T."/>
            <person name="Kobatake N."/>
            <person name="Inagaki H."/>
            <person name="Ikema Y."/>
            <person name="Okamoto S."/>
            <person name="Okitani R."/>
            <person name="Kawakami T."/>
            <person name="Noguchi S."/>
            <person name="Itoh T."/>
            <person name="Shigeta K."/>
            <person name="Senba T."/>
            <person name="Matsumura K."/>
            <person name="Nakajima Y."/>
            <person name="Mizuno T."/>
            <person name="Morinaga M."/>
            <person name="Sasaki M."/>
            <person name="Togashi T."/>
            <person name="Oyama M."/>
            <person name="Hata H."/>
            <person name="Watanabe M."/>
            <person name="Komatsu T."/>
            <person name="Mizushima-Sugano J."/>
            <person name="Satoh T."/>
            <person name="Shirai Y."/>
            <person name="Takahashi Y."/>
            <person name="Nakagawa K."/>
            <person name="Okumura K."/>
            <person name="Nagase T."/>
            <person name="Nomura N."/>
            <person name="Kikuchi H."/>
            <person name="Masuho Y."/>
            <person name="Yamashita R."/>
            <person name="Nakai K."/>
            <person name="Yada T."/>
            <person name="Nakamura Y."/>
            <person name="Ohara O."/>
            <person name="Isogai T."/>
            <person name="Sugano S."/>
        </authorList>
    </citation>
    <scope>NUCLEOTIDE SEQUENCE [LARGE SCALE MRNA] (ISOFORM 3)</scope>
    <source>
        <tissue>Esophagus</tissue>
    </source>
</reference>
<reference key="3">
    <citation type="submission" date="2005-04" db="EMBL/GenBank/DDBJ databases">
        <authorList>
            <person name="Suzuki Y."/>
            <person name="Sugano S."/>
            <person name="Totoki Y."/>
            <person name="Toyoda A."/>
            <person name="Takeda T."/>
            <person name="Sakaki Y."/>
            <person name="Tanaka A."/>
            <person name="Yokoyama S."/>
        </authorList>
    </citation>
    <scope>NUCLEOTIDE SEQUENCE [LARGE SCALE MRNA] (ISOFORM 1)</scope>
    <source>
        <tissue>Colon</tissue>
    </source>
</reference>
<reference key="4">
    <citation type="journal article" date="2004" name="Nature">
        <title>The DNA sequence and analysis of human chromosome 13.</title>
        <authorList>
            <person name="Dunham A."/>
            <person name="Matthews L.H."/>
            <person name="Burton J."/>
            <person name="Ashurst J.L."/>
            <person name="Howe K.L."/>
            <person name="Ashcroft K.J."/>
            <person name="Beare D.M."/>
            <person name="Burford D.C."/>
            <person name="Hunt S.E."/>
            <person name="Griffiths-Jones S."/>
            <person name="Jones M.C."/>
            <person name="Keenan S.J."/>
            <person name="Oliver K."/>
            <person name="Scott C.E."/>
            <person name="Ainscough R."/>
            <person name="Almeida J.P."/>
            <person name="Ambrose K.D."/>
            <person name="Andrews D.T."/>
            <person name="Ashwell R.I.S."/>
            <person name="Babbage A.K."/>
            <person name="Bagguley C.L."/>
            <person name="Bailey J."/>
            <person name="Bannerjee R."/>
            <person name="Barlow K.F."/>
            <person name="Bates K."/>
            <person name="Beasley H."/>
            <person name="Bird C.P."/>
            <person name="Bray-Allen S."/>
            <person name="Brown A.J."/>
            <person name="Brown J.Y."/>
            <person name="Burrill W."/>
            <person name="Carder C."/>
            <person name="Carter N.P."/>
            <person name="Chapman J.C."/>
            <person name="Clamp M.E."/>
            <person name="Clark S.Y."/>
            <person name="Clarke G."/>
            <person name="Clee C.M."/>
            <person name="Clegg S.C."/>
            <person name="Cobley V."/>
            <person name="Collins J.E."/>
            <person name="Corby N."/>
            <person name="Coville G.J."/>
            <person name="Deloukas P."/>
            <person name="Dhami P."/>
            <person name="Dunham I."/>
            <person name="Dunn M."/>
            <person name="Earthrowl M.E."/>
            <person name="Ellington A.G."/>
            <person name="Faulkner L."/>
            <person name="Frankish A.G."/>
            <person name="Frankland J."/>
            <person name="French L."/>
            <person name="Garner P."/>
            <person name="Garnett J."/>
            <person name="Gilbert J.G.R."/>
            <person name="Gilson C.J."/>
            <person name="Ghori J."/>
            <person name="Grafham D.V."/>
            <person name="Gribble S.M."/>
            <person name="Griffiths C."/>
            <person name="Hall R.E."/>
            <person name="Hammond S."/>
            <person name="Harley J.L."/>
            <person name="Hart E.A."/>
            <person name="Heath P.D."/>
            <person name="Howden P.J."/>
            <person name="Huckle E.J."/>
            <person name="Hunt P.J."/>
            <person name="Hunt A.R."/>
            <person name="Johnson C."/>
            <person name="Johnson D."/>
            <person name="Kay M."/>
            <person name="Kimberley A.M."/>
            <person name="King A."/>
            <person name="Laird G.K."/>
            <person name="Langford C.J."/>
            <person name="Lawlor S."/>
            <person name="Leongamornlert D.A."/>
            <person name="Lloyd D.M."/>
            <person name="Lloyd C."/>
            <person name="Loveland J.E."/>
            <person name="Lovell J."/>
            <person name="Martin S."/>
            <person name="Mashreghi-Mohammadi M."/>
            <person name="McLaren S.J."/>
            <person name="McMurray A."/>
            <person name="Milne S."/>
            <person name="Moore M.J.F."/>
            <person name="Nickerson T."/>
            <person name="Palmer S.A."/>
            <person name="Pearce A.V."/>
            <person name="Peck A.I."/>
            <person name="Pelan S."/>
            <person name="Phillimore B."/>
            <person name="Porter K.M."/>
            <person name="Rice C.M."/>
            <person name="Searle S."/>
            <person name="Sehra H.K."/>
            <person name="Shownkeen R."/>
            <person name="Skuce C.D."/>
            <person name="Smith M."/>
            <person name="Steward C.A."/>
            <person name="Sycamore N."/>
            <person name="Tester J."/>
            <person name="Thomas D.W."/>
            <person name="Tracey A."/>
            <person name="Tromans A."/>
            <person name="Tubby B."/>
            <person name="Wall M."/>
            <person name="Wallis J.M."/>
            <person name="West A.P."/>
            <person name="Whitehead S.L."/>
            <person name="Willey D.L."/>
            <person name="Wilming L."/>
            <person name="Wray P.W."/>
            <person name="Wright M.W."/>
            <person name="Young L."/>
            <person name="Coulson A."/>
            <person name="Durbin R.M."/>
            <person name="Hubbard T."/>
            <person name="Sulston J.E."/>
            <person name="Beck S."/>
            <person name="Bentley D.R."/>
            <person name="Rogers J."/>
            <person name="Ross M.T."/>
        </authorList>
    </citation>
    <scope>NUCLEOTIDE SEQUENCE [LARGE SCALE GENOMIC DNA]</scope>
</reference>
<reference key="5">
    <citation type="submission" date="2008-04" db="EMBL/GenBank/DDBJ databases">
        <authorList>
            <person name="Mural R.J."/>
            <person name="Istrail S."/>
            <person name="Sutton G.G."/>
            <person name="Florea L."/>
            <person name="Halpern A.L."/>
            <person name="Mobarry C.M."/>
            <person name="Lippert R."/>
            <person name="Walenz B."/>
            <person name="Shatkay H."/>
            <person name="Dew I."/>
            <person name="Miller J.R."/>
            <person name="Flanigan M.J."/>
            <person name="Edwards N.J."/>
            <person name="Bolanos R."/>
            <person name="Fasulo D."/>
            <person name="Halldorsson B.V."/>
            <person name="Hannenhalli S."/>
            <person name="Turner R."/>
            <person name="Yooseph S."/>
            <person name="Lu F."/>
            <person name="Nusskern D.R."/>
            <person name="Shue B.C."/>
            <person name="Zheng X.H."/>
            <person name="Zhong F."/>
            <person name="Delcher A.L."/>
            <person name="Huson D.H."/>
            <person name="Kravitz S.A."/>
            <person name="Mouchard L."/>
            <person name="Reinert K."/>
            <person name="Remington K.A."/>
            <person name="Clark A.G."/>
            <person name="Waterman M.S."/>
            <person name="Eichler E.E."/>
            <person name="Adams M.D."/>
            <person name="Hunkapiller M.W."/>
            <person name="Myers E.W."/>
            <person name="Venter J.C."/>
        </authorList>
    </citation>
    <scope>NUCLEOTIDE SEQUENCE [LARGE SCALE GENOMIC DNA]</scope>
</reference>
<reference key="6">
    <citation type="journal article" date="2004" name="Genome Res.">
        <title>The status, quality, and expansion of the NIH full-length cDNA project: the Mammalian Gene Collection (MGC).</title>
        <authorList>
            <consortium name="The MGC Project Team"/>
        </authorList>
    </citation>
    <scope>NUCLEOTIDE SEQUENCE [LARGE SCALE MRNA] (ISOFORM 2)</scope>
    <source>
        <tissue>Testis</tissue>
    </source>
</reference>
<dbReference type="EMBL" id="AF045941">
    <property type="protein sequence ID" value="AAC78461.1"/>
    <property type="molecule type" value="mRNA"/>
</dbReference>
<dbReference type="EMBL" id="AK301659">
    <property type="protein sequence ID" value="BAH13533.1"/>
    <property type="molecule type" value="mRNA"/>
</dbReference>
<dbReference type="EMBL" id="AK222720">
    <property type="protein sequence ID" value="BAD96440.1"/>
    <property type="molecule type" value="mRNA"/>
</dbReference>
<dbReference type="EMBL" id="AL137140">
    <property type="status" value="NOT_ANNOTATED_CDS"/>
    <property type="molecule type" value="Genomic_DNA"/>
</dbReference>
<dbReference type="EMBL" id="CH471093">
    <property type="protein sequence ID" value="EAW80568.1"/>
    <property type="molecule type" value="Genomic_DNA"/>
</dbReference>
<dbReference type="EMBL" id="CH471093">
    <property type="protein sequence ID" value="EAW80569.1"/>
    <property type="molecule type" value="Genomic_DNA"/>
</dbReference>
<dbReference type="EMBL" id="BC047536">
    <property type="protein sequence ID" value="AAH47536.1"/>
    <property type="molecule type" value="mRNA"/>
</dbReference>
<dbReference type="CCDS" id="CCDS53877.1">
    <molecule id="O95171-3"/>
</dbReference>
<dbReference type="CCDS" id="CCDS9458.1">
    <molecule id="O95171-2"/>
</dbReference>
<dbReference type="CCDS" id="CCDS9459.1">
    <molecule id="O95171-1"/>
</dbReference>
<dbReference type="RefSeq" id="NP_001154178.1">
    <molecule id="O95171-3"/>
    <property type="nucleotide sequence ID" value="NM_001160706.2"/>
</dbReference>
<dbReference type="RefSeq" id="NP_003834.3">
    <molecule id="O95171-2"/>
    <property type="nucleotide sequence ID" value="NM_003843.3"/>
</dbReference>
<dbReference type="RefSeq" id="NP_659001.2">
    <molecule id="O95171-1"/>
    <property type="nucleotide sequence ID" value="NM_144777.3"/>
</dbReference>
<dbReference type="BioGRID" id="114324">
    <property type="interactions" value="45"/>
</dbReference>
<dbReference type="FunCoup" id="O95171">
    <property type="interactions" value="61"/>
</dbReference>
<dbReference type="IntAct" id="O95171">
    <property type="interactions" value="29"/>
</dbReference>
<dbReference type="MINT" id="O95171"/>
<dbReference type="STRING" id="9606.ENSP00000302579"/>
<dbReference type="GlyConnect" id="1724">
    <property type="glycosylation" value="5 N-Linked glycans (1 site)"/>
</dbReference>
<dbReference type="GlyCosmos" id="O95171">
    <property type="glycosylation" value="1 site, 4 glycans"/>
</dbReference>
<dbReference type="GlyGen" id="O95171">
    <property type="glycosylation" value="2 sites, 4 N-linked glycans (1 site), 1 O-linked glycan (1 site)"/>
</dbReference>
<dbReference type="iPTMnet" id="O95171"/>
<dbReference type="PhosphoSitePlus" id="O95171"/>
<dbReference type="BioMuta" id="SCEL"/>
<dbReference type="jPOST" id="O95171"/>
<dbReference type="MassIVE" id="O95171"/>
<dbReference type="PaxDb" id="9606-ENSP00000302579"/>
<dbReference type="PeptideAtlas" id="O95171"/>
<dbReference type="PRIDE" id="O95171"/>
<dbReference type="ProteomicsDB" id="27081"/>
<dbReference type="ProteomicsDB" id="50686">
    <molecule id="O95171-1"/>
</dbReference>
<dbReference type="ProteomicsDB" id="50687">
    <molecule id="O95171-2"/>
</dbReference>
<dbReference type="Pumba" id="O95171"/>
<dbReference type="Antibodypedia" id="24603">
    <property type="antibodies" value="160 antibodies from 25 providers"/>
</dbReference>
<dbReference type="DNASU" id="8796"/>
<dbReference type="Ensembl" id="ENST00000349847.4">
    <molecule id="O95171-1"/>
    <property type="protein sequence ID" value="ENSP00000302579.5"/>
    <property type="gene ID" value="ENSG00000136155.17"/>
</dbReference>
<dbReference type="Ensembl" id="ENST00000377246.7">
    <molecule id="O95171-2"/>
    <property type="protein sequence ID" value="ENSP00000366454.3"/>
    <property type="gene ID" value="ENSG00000136155.17"/>
</dbReference>
<dbReference type="Ensembl" id="ENST00000535157.5">
    <molecule id="O95171-3"/>
    <property type="protein sequence ID" value="ENSP00000437895.1"/>
    <property type="gene ID" value="ENSG00000136155.17"/>
</dbReference>
<dbReference type="GeneID" id="8796"/>
<dbReference type="KEGG" id="hsa:8796"/>
<dbReference type="MANE-Select" id="ENST00000349847.4">
    <property type="protein sequence ID" value="ENSP00000302579.5"/>
    <property type="RefSeq nucleotide sequence ID" value="NM_144777.3"/>
    <property type="RefSeq protein sequence ID" value="NP_659001.2"/>
</dbReference>
<dbReference type="UCSC" id="uc001vki.4">
    <molecule id="O95171-1"/>
    <property type="organism name" value="human"/>
</dbReference>
<dbReference type="AGR" id="HGNC:10573"/>
<dbReference type="CTD" id="8796"/>
<dbReference type="DisGeNET" id="8796"/>
<dbReference type="GeneCards" id="SCEL"/>
<dbReference type="HGNC" id="HGNC:10573">
    <property type="gene designation" value="SCEL"/>
</dbReference>
<dbReference type="HPA" id="ENSG00000136155">
    <property type="expression patterns" value="Tissue enhanced (esophagus, skin)"/>
</dbReference>
<dbReference type="MIM" id="604112">
    <property type="type" value="gene"/>
</dbReference>
<dbReference type="neXtProt" id="NX_O95171"/>
<dbReference type="OpenTargets" id="ENSG00000136155"/>
<dbReference type="PharmGKB" id="PA34986"/>
<dbReference type="VEuPathDB" id="HostDB:ENSG00000136155"/>
<dbReference type="eggNOG" id="KOG1704">
    <property type="taxonomic scope" value="Eukaryota"/>
</dbReference>
<dbReference type="GeneTree" id="ENSGT00530000063872"/>
<dbReference type="HOGENOM" id="CLU_399516_0_0_1"/>
<dbReference type="InParanoid" id="O95171"/>
<dbReference type="OMA" id="WIYKQTI"/>
<dbReference type="OrthoDB" id="9908139at2759"/>
<dbReference type="PAN-GO" id="O95171">
    <property type="GO annotations" value="2 GO annotations based on evolutionary models"/>
</dbReference>
<dbReference type="PhylomeDB" id="O95171"/>
<dbReference type="TreeFam" id="TF335114"/>
<dbReference type="PathwayCommons" id="O95171"/>
<dbReference type="SignaLink" id="O95171"/>
<dbReference type="BioGRID-ORCS" id="8796">
    <property type="hits" value="9 hits in 1140 CRISPR screens"/>
</dbReference>
<dbReference type="ChiTaRS" id="SCEL">
    <property type="organism name" value="human"/>
</dbReference>
<dbReference type="GeneWiki" id="SCEL_(gene)"/>
<dbReference type="GenomeRNAi" id="8796"/>
<dbReference type="Pharos" id="O95171">
    <property type="development level" value="Tbio"/>
</dbReference>
<dbReference type="PRO" id="PR:O95171"/>
<dbReference type="Proteomes" id="UP000005640">
    <property type="component" value="Chromosome 13"/>
</dbReference>
<dbReference type="RNAct" id="O95171">
    <property type="molecule type" value="protein"/>
</dbReference>
<dbReference type="Bgee" id="ENSG00000136155">
    <property type="expression patterns" value="Expressed in tongue squamous epithelium and 115 other cell types or tissues"/>
</dbReference>
<dbReference type="ExpressionAtlas" id="O95171">
    <property type="expression patterns" value="baseline and differential"/>
</dbReference>
<dbReference type="GO" id="GO:0001533">
    <property type="term" value="C:cornified envelope"/>
    <property type="evidence" value="ECO:0000304"/>
    <property type="project" value="UniProtKB"/>
</dbReference>
<dbReference type="GO" id="GO:0005737">
    <property type="term" value="C:cytoplasm"/>
    <property type="evidence" value="ECO:0000314"/>
    <property type="project" value="UniProtKB"/>
</dbReference>
<dbReference type="GO" id="GO:0070062">
    <property type="term" value="C:extracellular exosome"/>
    <property type="evidence" value="ECO:0007005"/>
    <property type="project" value="UniProtKB"/>
</dbReference>
<dbReference type="GO" id="GO:0048471">
    <property type="term" value="C:perinuclear region of cytoplasm"/>
    <property type="evidence" value="ECO:0000314"/>
    <property type="project" value="BHF-UCL"/>
</dbReference>
<dbReference type="GO" id="GO:0046872">
    <property type="term" value="F:metal ion binding"/>
    <property type="evidence" value="ECO:0007669"/>
    <property type="project" value="UniProtKB-KW"/>
</dbReference>
<dbReference type="GO" id="GO:0009792">
    <property type="term" value="P:embryo development ending in birth or egg hatching"/>
    <property type="evidence" value="ECO:0000250"/>
    <property type="project" value="UniProtKB"/>
</dbReference>
<dbReference type="GO" id="GO:0008544">
    <property type="term" value="P:epidermis development"/>
    <property type="evidence" value="ECO:0000250"/>
    <property type="project" value="UniProtKB"/>
</dbReference>
<dbReference type="GO" id="GO:0030216">
    <property type="term" value="P:keratinocyte differentiation"/>
    <property type="evidence" value="ECO:0000314"/>
    <property type="project" value="UniProtKB"/>
</dbReference>
<dbReference type="GO" id="GO:0090263">
    <property type="term" value="P:positive regulation of canonical Wnt signaling pathway"/>
    <property type="evidence" value="ECO:0000315"/>
    <property type="project" value="BHF-UCL"/>
</dbReference>
<dbReference type="GO" id="GO:0009612">
    <property type="term" value="P:response to mechanical stimulus"/>
    <property type="evidence" value="ECO:0000270"/>
    <property type="project" value="BHF-UCL"/>
</dbReference>
<dbReference type="CDD" id="cd08368">
    <property type="entry name" value="LIM"/>
    <property type="match status" value="1"/>
</dbReference>
<dbReference type="FunFam" id="2.10.110.10:FF:000091">
    <property type="entry name" value="Sciellin"/>
    <property type="match status" value="1"/>
</dbReference>
<dbReference type="Gene3D" id="2.10.110.10">
    <property type="entry name" value="Cysteine Rich Protein"/>
    <property type="match status" value="1"/>
</dbReference>
<dbReference type="InterPro" id="IPR052621">
    <property type="entry name" value="Cell_Prolif/Cornif_Regul"/>
</dbReference>
<dbReference type="InterPro" id="IPR001781">
    <property type="entry name" value="Znf_LIM"/>
</dbReference>
<dbReference type="PANTHER" id="PTHR15468:SF7">
    <property type="entry name" value="SCIELLIN"/>
    <property type="match status" value="1"/>
</dbReference>
<dbReference type="PANTHER" id="PTHR15468">
    <property type="entry name" value="ZNF185"/>
    <property type="match status" value="1"/>
</dbReference>
<dbReference type="SMART" id="SM00132">
    <property type="entry name" value="LIM"/>
    <property type="match status" value="1"/>
</dbReference>
<dbReference type="PROSITE" id="PS00478">
    <property type="entry name" value="LIM_DOMAIN_1"/>
    <property type="match status" value="1"/>
</dbReference>
<dbReference type="PROSITE" id="PS50023">
    <property type="entry name" value="LIM_DOMAIN_2"/>
    <property type="match status" value="1"/>
</dbReference>
<name>SCEL_HUMAN</name>
<organism>
    <name type="scientific">Homo sapiens</name>
    <name type="common">Human</name>
    <dbReference type="NCBI Taxonomy" id="9606"/>
    <lineage>
        <taxon>Eukaryota</taxon>
        <taxon>Metazoa</taxon>
        <taxon>Chordata</taxon>
        <taxon>Craniata</taxon>
        <taxon>Vertebrata</taxon>
        <taxon>Euteleostomi</taxon>
        <taxon>Mammalia</taxon>
        <taxon>Eutheria</taxon>
        <taxon>Euarchontoglires</taxon>
        <taxon>Primates</taxon>
        <taxon>Haplorrhini</taxon>
        <taxon>Catarrhini</taxon>
        <taxon>Hominidae</taxon>
        <taxon>Homo</taxon>
    </lineage>
</organism>
<accession>O95171</accession>
<accession>B7Z797</accession>
<accession>F5H651</accession>
<accession>Q53H61</accession>
<accession>Q5W0S8</accession>
<accession>Q5W0S9</accession>
<accession>Q86X00</accession>
<feature type="chain" id="PRO_0000075903" description="Sciellin">
    <location>
        <begin position="1"/>
        <end position="688"/>
    </location>
</feature>
<feature type="repeat" description="1">
    <location>
        <begin position="251"/>
        <end position="266"/>
    </location>
</feature>
<feature type="repeat" description="2">
    <location>
        <begin position="267"/>
        <end position="286"/>
    </location>
</feature>
<feature type="repeat" description="3">
    <location>
        <begin position="287"/>
        <end position="306"/>
    </location>
</feature>
<feature type="repeat" description="4">
    <location>
        <begin position="307"/>
        <end position="326"/>
    </location>
</feature>
<feature type="repeat" description="5">
    <location>
        <begin position="327"/>
        <end position="346"/>
    </location>
</feature>
<feature type="repeat" description="6">
    <location>
        <begin position="347"/>
        <end position="366"/>
    </location>
</feature>
<feature type="repeat" description="7">
    <location>
        <begin position="367"/>
        <end position="386"/>
    </location>
</feature>
<feature type="repeat" description="8">
    <location>
        <begin position="387"/>
        <end position="406"/>
    </location>
</feature>
<feature type="repeat" description="9">
    <location>
        <begin position="407"/>
        <end position="426"/>
    </location>
</feature>
<feature type="repeat" description="10">
    <location>
        <begin position="427"/>
        <end position="446"/>
    </location>
</feature>
<feature type="repeat" description="11">
    <location>
        <begin position="447"/>
        <end position="465"/>
    </location>
</feature>
<feature type="repeat" description="12">
    <location>
        <begin position="466"/>
        <end position="484"/>
    </location>
</feature>
<feature type="repeat" description="13">
    <location>
        <begin position="485"/>
        <end position="504"/>
    </location>
</feature>
<feature type="repeat" description="14">
    <location>
        <begin position="505"/>
        <end position="523"/>
    </location>
</feature>
<feature type="repeat" description="15">
    <location>
        <begin position="524"/>
        <end position="543"/>
    </location>
</feature>
<feature type="repeat" description="16">
    <location>
        <begin position="544"/>
        <end position="563"/>
    </location>
</feature>
<feature type="domain" description="LIM zinc-binding" evidence="2">
    <location>
        <begin position="619"/>
        <end position="685"/>
    </location>
</feature>
<feature type="region of interest" description="Disordered" evidence="3">
    <location>
        <begin position="1"/>
        <end position="29"/>
    </location>
</feature>
<feature type="region of interest" description="Disordered" evidence="3">
    <location>
        <begin position="134"/>
        <end position="231"/>
    </location>
</feature>
<feature type="region of interest" description="16 X approximate tandem repeats">
    <location>
        <begin position="251"/>
        <end position="563"/>
    </location>
</feature>
<feature type="region of interest" description="Disordered" evidence="3">
    <location>
        <begin position="340"/>
        <end position="373"/>
    </location>
</feature>
<feature type="compositionally biased region" description="Polar residues" evidence="3">
    <location>
        <begin position="1"/>
        <end position="25"/>
    </location>
</feature>
<feature type="compositionally biased region" description="Low complexity" evidence="3">
    <location>
        <begin position="140"/>
        <end position="154"/>
    </location>
</feature>
<feature type="compositionally biased region" description="Pro residues" evidence="3">
    <location>
        <begin position="186"/>
        <end position="195"/>
    </location>
</feature>
<feature type="compositionally biased region" description="Basic and acidic residues" evidence="3">
    <location>
        <begin position="358"/>
        <end position="373"/>
    </location>
</feature>
<feature type="modified residue" description="N6-acetyllysine" evidence="1">
    <location>
        <position position="83"/>
    </location>
</feature>
<feature type="modified residue" description="Phosphoserine" evidence="1">
    <location>
        <position position="289"/>
    </location>
</feature>
<feature type="modified residue" description="Phosphoserine" evidence="1">
    <location>
        <position position="389"/>
    </location>
</feature>
<feature type="splice variant" id="VSP_045288" description="In isoform 3." evidence="4">
    <location>
        <begin position="160"/>
        <end position="181"/>
    </location>
</feature>
<feature type="splice variant" id="VSP_035980" description="In isoform 2." evidence="5 6">
    <original>RSQDLDNIVKVATSLQRSDKG</original>
    <variation>S</variation>
    <location>
        <begin position="231"/>
        <end position="251"/>
    </location>
</feature>
<feature type="splice variant" id="VSP_045289" description="In isoform 3." evidence="4">
    <location>
        <begin position="367"/>
        <end position="386"/>
    </location>
</feature>
<feature type="sequence variant" id="VAR_047920" description="In dbSNP:rs34164479.">
    <original>V</original>
    <variation>L</variation>
    <location>
        <position position="336"/>
    </location>
</feature>
<feature type="sequence variant" id="VAR_047921" description="In dbSNP:rs2274016.">
    <original>R</original>
    <variation>K</variation>
    <location>
        <position position="386"/>
    </location>
</feature>
<feature type="sequence variant" id="VAR_047922" description="In dbSNP:rs8002725.">
    <original>K</original>
    <variation>R</variation>
    <location>
        <position position="480"/>
    </location>
</feature>
<feature type="sequence conflict" description="In Ref. 2; BAH13533." evidence="7" ref="2">
    <original>R</original>
    <variation>G</variation>
    <location>
        <position position="37"/>
    </location>
</feature>
<feature type="sequence conflict" description="In Ref. 6; AAH47536." evidence="7" ref="6">
    <original>M</original>
    <variation>V</variation>
    <location>
        <position position="124"/>
    </location>
</feature>
<feature type="sequence conflict" description="In Ref. 6; AAH47536." evidence="7" ref="6">
    <original>P</original>
    <variation>T</variation>
    <location>
        <position position="201"/>
    </location>
</feature>
<feature type="sequence conflict" description="In Ref. 1; AAC78461." evidence="7" ref="1">
    <original>N</original>
    <variation>D</variation>
    <location>
        <position position="337"/>
    </location>
</feature>
<feature type="sequence conflict" description="In Ref. 1; AAC78461." evidence="7" ref="1">
    <original>M</original>
    <variation>T</variation>
    <location>
        <position position="340"/>
    </location>
</feature>
<feature type="sequence conflict" description="In Ref. 3; BAD96440." evidence="7" ref="3">
    <original>S</original>
    <variation>P</variation>
    <location>
        <position position="680"/>
    </location>
</feature>
<evidence type="ECO:0000250" key="1">
    <source>
        <dbReference type="UniProtKB" id="Q9EQG3"/>
    </source>
</evidence>
<evidence type="ECO:0000255" key="2">
    <source>
        <dbReference type="PROSITE-ProRule" id="PRU00125"/>
    </source>
</evidence>
<evidence type="ECO:0000256" key="3">
    <source>
        <dbReference type="SAM" id="MobiDB-lite"/>
    </source>
</evidence>
<evidence type="ECO:0000303" key="4">
    <source>
    </source>
</evidence>
<evidence type="ECO:0000303" key="5">
    <source>
    </source>
</evidence>
<evidence type="ECO:0000303" key="6">
    <source>
    </source>
</evidence>
<evidence type="ECO:0000305" key="7"/>
<keyword id="KW-0007">Acetylation</keyword>
<keyword id="KW-0025">Alternative splicing</keyword>
<keyword id="KW-0963">Cytoplasm</keyword>
<keyword id="KW-0903">Direct protein sequencing</keyword>
<keyword id="KW-0440">LIM domain</keyword>
<keyword id="KW-0472">Membrane</keyword>
<keyword id="KW-0479">Metal-binding</keyword>
<keyword id="KW-0597">Phosphoprotein</keyword>
<keyword id="KW-1267">Proteomics identification</keyword>
<keyword id="KW-1185">Reference proteome</keyword>
<keyword id="KW-0677">Repeat</keyword>
<keyword id="KW-0862">Zinc</keyword>
<gene>
    <name type="primary">SCEL</name>
</gene>
<comment type="function">
    <text>May function in the assembly or regulation of proteins in the cornified envelope. The LIM domain may be involved in homotypic or heterotypic associations and may function to localize sciellin to the cornified envelope.</text>
</comment>
<comment type="interaction">
    <interactant intactId="EBI-7543896">
        <id>O95171</id>
    </interactant>
    <interactant intactId="EBI-740459">
        <id>P51116</id>
        <label>FXR2</label>
    </interactant>
    <organismsDiffer>false</organismsDiffer>
    <experiments>4</experiments>
</comment>
<comment type="interaction">
    <interactant intactId="EBI-7543896">
        <id>O95171</id>
    </interactant>
    <interactant intactId="EBI-618309">
        <id>Q08379</id>
        <label>GOLGA2</label>
    </interactant>
    <organismsDiffer>false</organismsDiffer>
    <experiments>4</experiments>
</comment>
<comment type="interaction">
    <interactant intactId="EBI-7543896">
        <id>O95171</id>
    </interactant>
    <interactant intactId="EBI-2125614">
        <id>Q9BVG8</id>
        <label>KIFC3</label>
    </interactant>
    <organismsDiffer>false</organismsDiffer>
    <experiments>3</experiments>
</comment>
<comment type="interaction">
    <interactant intactId="EBI-7543896">
        <id>O95171</id>
    </interactant>
    <interactant intactId="EBI-742948">
        <id>Q5JR59</id>
        <label>MTUS2</label>
    </interactant>
    <organismsDiffer>false</organismsDiffer>
    <experiments>3</experiments>
</comment>
<comment type="interaction">
    <interactant intactId="EBI-7543896">
        <id>O95171</id>
    </interactant>
    <interactant intactId="EBI-372942">
        <id>Q13287</id>
        <label>NMI</label>
    </interactant>
    <organismsDiffer>false</organismsDiffer>
    <experiments>7</experiments>
</comment>
<comment type="interaction">
    <interactant intactId="EBI-7543896">
        <id>O95171</id>
    </interactant>
    <interactant intactId="EBI-744794">
        <id>Q9BZW7</id>
        <label>TSGA10</label>
    </interactant>
    <organismsDiffer>false</organismsDiffer>
    <experiments>3</experiments>
</comment>
<comment type="interaction">
    <interactant intactId="EBI-12056699">
        <id>O95171-2</id>
    </interactant>
    <interactant intactId="EBI-372942">
        <id>Q13287</id>
        <label>NMI</label>
    </interactant>
    <organismsDiffer>false</organismsDiffer>
    <experiments>3</experiments>
</comment>
<comment type="subcellular location">
    <subcellularLocation>
        <location>Cytoplasm</location>
    </subcellularLocation>
    <subcellularLocation>
        <location>Membrane</location>
    </subcellularLocation>
    <text>May become cross-linked to membrane proteins by transglutaminase.</text>
</comment>
<comment type="alternative products">
    <event type="alternative splicing"/>
    <isoform>
        <id>O95171-1</id>
        <name>1</name>
        <sequence type="displayed"/>
    </isoform>
    <isoform>
        <id>O95171-2</id>
        <name>2</name>
        <sequence type="described" ref="VSP_035980"/>
    </isoform>
    <isoform>
        <id>O95171-3</id>
        <name>3</name>
        <sequence type="described" ref="VSP_045288 VSP_045289"/>
    </isoform>
</comment>
<comment type="tissue specificity">
    <text>Highly expressed in esophagus. It is also expressed in keratinocytes, amniotic tissue, foreskin stratum spinosum and stratum granulosum, hair follicle and nail.</text>
</comment>
<protein>
    <recommendedName>
        <fullName>Sciellin</fullName>
    </recommendedName>
</protein>
<sequence>MSNVTLRKMSPTGNEMKSTTQGTTRKQQDFHEVNKRRTFLQDNSWIKKRPEEEKDENYGRVVLNRHNSHDALDRKVNERDVPKATISRYSSDDTLDRISDRNDAAKTYKANTLDNQLTNRSMSMFRSLEVTKLQPGGSLNANTSNTIASTSATTPVKKKRQSWFPPPPPGYNASSSTGTRRREPGVHPPIPPKPSSPVSSPNQLRQDNRQIHPPKPGVYTETNRSAERNIRSQDLDNIVKVATSLQRSDKGEELDNLIKMNKSLNRNQGLDSLFRANPKVEEREKRAKSLESLIYMSTRTDKDGKGIQSLGSPIKVNQRTDKNEKGRQNLESVAKVNARMNKTSRRSEDLDNATEVNPKGHENTTGKKDLDGLIKVDPETNKNITRGQSLDNLIKVTPEVKRSNQGSKDLNNFIKVYPGTEKSTEGGQSLDSLIKVTPERNRTNQGNQDLENLIKVIPSANKSSEQGLDEHINVSPKAVKNTDGKQDLDKLIKVNPEIFTNNQRNQDLANLIKVNPAVIRNNQSQDLDNLIKVKPSALRNTNRDQNLENLIEVNSHVSENKNGSSNTGAKQAGPQDTVVYTRTYVENSKSPKDGYQENISGKYIQTVYSTSDRSVIERDMCTYCRKPLGVETKMILDELQICCHSTCFKCEICKQPLENLQAGDSIWIYRQTIHCEPCYSKIMAKWIP</sequence>
<proteinExistence type="evidence at protein level"/>